<proteinExistence type="inferred from homology"/>
<sequence length="239" mass="27201">MAHITRFETPWFLVISKKQYKWTVRPNAGPHPIEKSIPLAVVIRDYLKLAETVREAKHIIFDGKVLVDGKVRKDYKYPVGLMDIVSIPSADLYFRVIPDNVRFMRLSKISADEAHYKYVRIMNKTTVKGGSIQLNLEDGRNILVDKETAKSFKTLMTLKIELPSQNIVDSFIISEGSYAIFVGGKNVGIHGVVKNINLSKFKSRKYSVITLESKDGNTYQTNLMNVMSIGREKSDMRVD</sequence>
<comment type="similarity">
    <text evidence="1">Belongs to the eukaryotic ribosomal protein eS4 family.</text>
</comment>
<evidence type="ECO:0000255" key="1">
    <source>
        <dbReference type="HAMAP-Rule" id="MF_00485"/>
    </source>
</evidence>
<evidence type="ECO:0000305" key="2"/>
<feature type="chain" id="PRO_1000206438" description="Small ribosomal subunit protein eS4">
    <location>
        <begin position="1"/>
        <end position="239"/>
    </location>
</feature>
<feature type="domain" description="S4 RNA-binding" evidence="1">
    <location>
        <begin position="37"/>
        <end position="99"/>
    </location>
</feature>
<keyword id="KW-0687">Ribonucleoprotein</keyword>
<keyword id="KW-0689">Ribosomal protein</keyword>
<keyword id="KW-0694">RNA-binding</keyword>
<keyword id="KW-0699">rRNA-binding</keyword>
<name>RS4E_SACI6</name>
<accession>C4KHG8</accession>
<reference key="1">
    <citation type="journal article" date="2009" name="Proc. Natl. Acad. Sci. U.S.A.">
        <title>Biogeography of the Sulfolobus islandicus pan-genome.</title>
        <authorList>
            <person name="Reno M.L."/>
            <person name="Held N.L."/>
            <person name="Fields C.J."/>
            <person name="Burke P.V."/>
            <person name="Whitaker R.J."/>
        </authorList>
    </citation>
    <scope>NUCLEOTIDE SEQUENCE [LARGE SCALE GENOMIC DNA]</scope>
    <source>
        <strain>M.16.4 / Kamchatka #3</strain>
    </source>
</reference>
<protein>
    <recommendedName>
        <fullName evidence="1">Small ribosomal subunit protein eS4</fullName>
    </recommendedName>
    <alternativeName>
        <fullName evidence="2">30S ribosomal protein S4e</fullName>
    </alternativeName>
</protein>
<dbReference type="EMBL" id="CP001402">
    <property type="protein sequence ID" value="ACR42032.1"/>
    <property type="molecule type" value="Genomic_DNA"/>
</dbReference>
<dbReference type="RefSeq" id="WP_012711430.1">
    <property type="nucleotide sequence ID" value="NC_012726.1"/>
</dbReference>
<dbReference type="SMR" id="C4KHG8"/>
<dbReference type="KEGG" id="sid:M164_1426"/>
<dbReference type="HOGENOM" id="CLU_060400_0_0_2"/>
<dbReference type="Proteomes" id="UP000001479">
    <property type="component" value="Chromosome"/>
</dbReference>
<dbReference type="GO" id="GO:0022627">
    <property type="term" value="C:cytosolic small ribosomal subunit"/>
    <property type="evidence" value="ECO:0007669"/>
    <property type="project" value="TreeGrafter"/>
</dbReference>
<dbReference type="GO" id="GO:0019843">
    <property type="term" value="F:rRNA binding"/>
    <property type="evidence" value="ECO:0007669"/>
    <property type="project" value="UniProtKB-KW"/>
</dbReference>
<dbReference type="GO" id="GO:0003735">
    <property type="term" value="F:structural constituent of ribosome"/>
    <property type="evidence" value="ECO:0007669"/>
    <property type="project" value="InterPro"/>
</dbReference>
<dbReference type="GO" id="GO:0006412">
    <property type="term" value="P:translation"/>
    <property type="evidence" value="ECO:0007669"/>
    <property type="project" value="UniProtKB-UniRule"/>
</dbReference>
<dbReference type="CDD" id="cd06087">
    <property type="entry name" value="KOW_RPS4"/>
    <property type="match status" value="1"/>
</dbReference>
<dbReference type="CDD" id="cd00165">
    <property type="entry name" value="S4"/>
    <property type="match status" value="1"/>
</dbReference>
<dbReference type="FunFam" id="2.30.30.30:FF:000069">
    <property type="entry name" value="30S ribosomal protein S4e"/>
    <property type="match status" value="1"/>
</dbReference>
<dbReference type="FunFam" id="3.10.290.10:FF:000002">
    <property type="entry name" value="40S ribosomal protein S4"/>
    <property type="match status" value="1"/>
</dbReference>
<dbReference type="Gene3D" id="2.30.30.30">
    <property type="match status" value="1"/>
</dbReference>
<dbReference type="Gene3D" id="2.40.50.740">
    <property type="match status" value="1"/>
</dbReference>
<dbReference type="Gene3D" id="3.10.290.10">
    <property type="entry name" value="RNA-binding S4 domain"/>
    <property type="match status" value="1"/>
</dbReference>
<dbReference type="HAMAP" id="MF_00485">
    <property type="entry name" value="Ribosomal_eS4"/>
    <property type="match status" value="1"/>
</dbReference>
<dbReference type="InterPro" id="IPR014722">
    <property type="entry name" value="Rib_uL2_dom2"/>
</dbReference>
<dbReference type="InterPro" id="IPR000876">
    <property type="entry name" value="Ribosomal_eS4"/>
</dbReference>
<dbReference type="InterPro" id="IPR013845">
    <property type="entry name" value="Ribosomal_eS4_central_region"/>
</dbReference>
<dbReference type="InterPro" id="IPR038237">
    <property type="entry name" value="Ribosomal_eS4_central_sf"/>
</dbReference>
<dbReference type="InterPro" id="IPR041982">
    <property type="entry name" value="Ribosomal_eS4_KOW"/>
</dbReference>
<dbReference type="InterPro" id="IPR002942">
    <property type="entry name" value="S4_RNA-bd"/>
</dbReference>
<dbReference type="InterPro" id="IPR036986">
    <property type="entry name" value="S4_RNA-bd_sf"/>
</dbReference>
<dbReference type="NCBIfam" id="NF003312">
    <property type="entry name" value="PRK04313.1"/>
    <property type="match status" value="1"/>
</dbReference>
<dbReference type="PANTHER" id="PTHR11581">
    <property type="entry name" value="30S/40S RIBOSOMAL PROTEIN S4"/>
    <property type="match status" value="1"/>
</dbReference>
<dbReference type="PANTHER" id="PTHR11581:SF0">
    <property type="entry name" value="SMALL RIBOSOMAL SUBUNIT PROTEIN ES4"/>
    <property type="match status" value="1"/>
</dbReference>
<dbReference type="Pfam" id="PF00900">
    <property type="entry name" value="Ribosomal_S4e"/>
    <property type="match status" value="1"/>
</dbReference>
<dbReference type="Pfam" id="PF01479">
    <property type="entry name" value="S4"/>
    <property type="match status" value="1"/>
</dbReference>
<dbReference type="PIRSF" id="PIRSF002116">
    <property type="entry name" value="Ribosomal_S4"/>
    <property type="match status" value="1"/>
</dbReference>
<dbReference type="SMART" id="SM00363">
    <property type="entry name" value="S4"/>
    <property type="match status" value="1"/>
</dbReference>
<dbReference type="SUPFAM" id="SSF55174">
    <property type="entry name" value="Alpha-L RNA-binding motif"/>
    <property type="match status" value="1"/>
</dbReference>
<dbReference type="PROSITE" id="PS50889">
    <property type="entry name" value="S4"/>
    <property type="match status" value="1"/>
</dbReference>
<organism>
    <name type="scientific">Saccharolobus islandicus (strain M.16.4 / Kamchatka #3)</name>
    <name type="common">Sulfolobus islandicus</name>
    <dbReference type="NCBI Taxonomy" id="426118"/>
    <lineage>
        <taxon>Archaea</taxon>
        <taxon>Thermoproteota</taxon>
        <taxon>Thermoprotei</taxon>
        <taxon>Sulfolobales</taxon>
        <taxon>Sulfolobaceae</taxon>
        <taxon>Saccharolobus</taxon>
    </lineage>
</organism>
<gene>
    <name evidence="1" type="primary">rps4e</name>
    <name type="ordered locus">M164_1426</name>
</gene>